<keyword id="KW-1003">Cell membrane</keyword>
<keyword id="KW-0472">Membrane</keyword>
<keyword id="KW-1185">Reference proteome</keyword>
<keyword id="KW-0677">Repeat</keyword>
<keyword id="KW-0812">Transmembrane</keyword>
<keyword id="KW-1133">Transmembrane helix</keyword>
<proteinExistence type="evidence at protein level"/>
<evidence type="ECO:0000255" key="1"/>
<evidence type="ECO:0000255" key="2">
    <source>
        <dbReference type="PROSITE-ProRule" id="PRU00703"/>
    </source>
</evidence>
<evidence type="ECO:0000255" key="3">
    <source>
        <dbReference type="PROSITE-ProRule" id="PRU01193"/>
    </source>
</evidence>
<evidence type="ECO:0000305" key="4"/>
<name>Y1841_MYCTU</name>
<dbReference type="EMBL" id="AL123456">
    <property type="protein sequence ID" value="CCP44607.1"/>
    <property type="molecule type" value="Genomic_DNA"/>
</dbReference>
<dbReference type="PIR" id="A70664">
    <property type="entry name" value="A70664"/>
</dbReference>
<dbReference type="RefSeq" id="NP_216357.1">
    <property type="nucleotide sequence ID" value="NC_000962.3"/>
</dbReference>
<dbReference type="RefSeq" id="WP_003900419.1">
    <property type="nucleotide sequence ID" value="NZ_NVQJ01000013.1"/>
</dbReference>
<dbReference type="SMR" id="P9WLQ7"/>
<dbReference type="STRING" id="83332.Rv1841c"/>
<dbReference type="PaxDb" id="83332-Rv1841c"/>
<dbReference type="GeneID" id="885656"/>
<dbReference type="KEGG" id="mtu:Rv1841c"/>
<dbReference type="KEGG" id="mtv:RVBD_1841c"/>
<dbReference type="TubercuList" id="Rv1841c"/>
<dbReference type="eggNOG" id="COG1253">
    <property type="taxonomic scope" value="Bacteria"/>
</dbReference>
<dbReference type="InParanoid" id="P9WLQ7"/>
<dbReference type="OrthoDB" id="110231at2"/>
<dbReference type="PhylomeDB" id="P9WLQ7"/>
<dbReference type="Proteomes" id="UP000001584">
    <property type="component" value="Chromosome"/>
</dbReference>
<dbReference type="GO" id="GO:0005886">
    <property type="term" value="C:plasma membrane"/>
    <property type="evidence" value="ECO:0007669"/>
    <property type="project" value="UniProtKB-SubCell"/>
</dbReference>
<dbReference type="CDD" id="cd04590">
    <property type="entry name" value="CBS_pair_CorC_HlyC_assoc"/>
    <property type="match status" value="1"/>
</dbReference>
<dbReference type="Gene3D" id="3.10.580.10">
    <property type="entry name" value="CBS-domain"/>
    <property type="match status" value="1"/>
</dbReference>
<dbReference type="InterPro" id="IPR000644">
    <property type="entry name" value="CBS_dom"/>
</dbReference>
<dbReference type="InterPro" id="IPR046342">
    <property type="entry name" value="CBS_dom_sf"/>
</dbReference>
<dbReference type="InterPro" id="IPR002550">
    <property type="entry name" value="CNNM"/>
</dbReference>
<dbReference type="InterPro" id="IPR044751">
    <property type="entry name" value="Ion_transp-like_CBS"/>
</dbReference>
<dbReference type="InterPro" id="IPR051676">
    <property type="entry name" value="UPF0053_domain"/>
</dbReference>
<dbReference type="PANTHER" id="PTHR43099:SF5">
    <property type="entry name" value="HLYC_CORC FAMILY TRANSPORTER"/>
    <property type="match status" value="1"/>
</dbReference>
<dbReference type="PANTHER" id="PTHR43099">
    <property type="entry name" value="UPF0053 PROTEIN YRKA"/>
    <property type="match status" value="1"/>
</dbReference>
<dbReference type="Pfam" id="PF00571">
    <property type="entry name" value="CBS"/>
    <property type="match status" value="2"/>
</dbReference>
<dbReference type="Pfam" id="PF01595">
    <property type="entry name" value="CNNM"/>
    <property type="match status" value="1"/>
</dbReference>
<dbReference type="SMART" id="SM00116">
    <property type="entry name" value="CBS"/>
    <property type="match status" value="2"/>
</dbReference>
<dbReference type="SUPFAM" id="SSF54631">
    <property type="entry name" value="CBS-domain pair"/>
    <property type="match status" value="1"/>
</dbReference>
<dbReference type="PROSITE" id="PS51371">
    <property type="entry name" value="CBS"/>
    <property type="match status" value="2"/>
</dbReference>
<dbReference type="PROSITE" id="PS51846">
    <property type="entry name" value="CNNM"/>
    <property type="match status" value="1"/>
</dbReference>
<organism>
    <name type="scientific">Mycobacterium tuberculosis (strain ATCC 25618 / H37Rv)</name>
    <dbReference type="NCBI Taxonomy" id="83332"/>
    <lineage>
        <taxon>Bacteria</taxon>
        <taxon>Bacillati</taxon>
        <taxon>Actinomycetota</taxon>
        <taxon>Actinomycetes</taxon>
        <taxon>Mycobacteriales</taxon>
        <taxon>Mycobacteriaceae</taxon>
        <taxon>Mycobacterium</taxon>
        <taxon>Mycobacterium tuberculosis complex</taxon>
    </lineage>
</organism>
<reference key="1">
    <citation type="journal article" date="1998" name="Nature">
        <title>Deciphering the biology of Mycobacterium tuberculosis from the complete genome sequence.</title>
        <authorList>
            <person name="Cole S.T."/>
            <person name="Brosch R."/>
            <person name="Parkhill J."/>
            <person name="Garnier T."/>
            <person name="Churcher C.M."/>
            <person name="Harris D.E."/>
            <person name="Gordon S.V."/>
            <person name="Eiglmeier K."/>
            <person name="Gas S."/>
            <person name="Barry C.E. III"/>
            <person name="Tekaia F."/>
            <person name="Badcock K."/>
            <person name="Basham D."/>
            <person name="Brown D."/>
            <person name="Chillingworth T."/>
            <person name="Connor R."/>
            <person name="Davies R.M."/>
            <person name="Devlin K."/>
            <person name="Feltwell T."/>
            <person name="Gentles S."/>
            <person name="Hamlin N."/>
            <person name="Holroyd S."/>
            <person name="Hornsby T."/>
            <person name="Jagels K."/>
            <person name="Krogh A."/>
            <person name="McLean J."/>
            <person name="Moule S."/>
            <person name="Murphy L.D."/>
            <person name="Oliver S."/>
            <person name="Osborne J."/>
            <person name="Quail M.A."/>
            <person name="Rajandream M.A."/>
            <person name="Rogers J."/>
            <person name="Rutter S."/>
            <person name="Seeger K."/>
            <person name="Skelton S."/>
            <person name="Squares S."/>
            <person name="Squares R."/>
            <person name="Sulston J.E."/>
            <person name="Taylor K."/>
            <person name="Whitehead S."/>
            <person name="Barrell B.G."/>
        </authorList>
    </citation>
    <scope>NUCLEOTIDE SEQUENCE [LARGE SCALE GENOMIC DNA]</scope>
    <source>
        <strain>ATCC 25618 / H37Rv</strain>
    </source>
</reference>
<reference key="2">
    <citation type="journal article" date="2011" name="Mol. Cell. Proteomics">
        <title>Proteogenomic analysis of Mycobacterium tuberculosis by high resolution mass spectrometry.</title>
        <authorList>
            <person name="Kelkar D.S."/>
            <person name="Kumar D."/>
            <person name="Kumar P."/>
            <person name="Balakrishnan L."/>
            <person name="Muthusamy B."/>
            <person name="Yadav A.K."/>
            <person name="Shrivastava P."/>
            <person name="Marimuthu A."/>
            <person name="Anand S."/>
            <person name="Sundaram H."/>
            <person name="Kingsbury R."/>
            <person name="Harsha H.C."/>
            <person name="Nair B."/>
            <person name="Prasad T.S."/>
            <person name="Chauhan D.S."/>
            <person name="Katoch K."/>
            <person name="Katoch V.M."/>
            <person name="Kumar P."/>
            <person name="Chaerkady R."/>
            <person name="Ramachandran S."/>
            <person name="Dash D."/>
            <person name="Pandey A."/>
        </authorList>
    </citation>
    <scope>IDENTIFICATION BY MASS SPECTROMETRY [LARGE SCALE ANALYSIS]</scope>
    <source>
        <strain>ATCC 25618 / H37Rv</strain>
    </source>
</reference>
<feature type="chain" id="PRO_0000103913" description="Uncharacterized protein Rv1841c">
    <location>
        <begin position="1"/>
        <end position="345"/>
    </location>
</feature>
<feature type="transmembrane region" description="Helical" evidence="1">
    <location>
        <begin position="3"/>
        <end position="23"/>
    </location>
</feature>
<feature type="transmembrane region" description="Helical" evidence="1">
    <location>
        <begin position="95"/>
        <end position="115"/>
    </location>
</feature>
<feature type="transmembrane region" description="Helical" evidence="1">
    <location>
        <begin position="312"/>
        <end position="332"/>
    </location>
</feature>
<feature type="domain" description="CNNM transmembrane" evidence="3">
    <location>
        <begin position="1"/>
        <end position="198"/>
    </location>
</feature>
<feature type="domain" description="CBS 1" evidence="2">
    <location>
        <begin position="217"/>
        <end position="280"/>
    </location>
</feature>
<feature type="domain" description="CBS 2" evidence="2">
    <location>
        <begin position="285"/>
        <end position="342"/>
    </location>
</feature>
<sequence>MDVLSAVLLALLLIGANAFFVGAEFALISARRDRLEALAEQGKATAVTVIRAGEQLPAMLTGAQLGVTVSSILLGRVGEPAVVKLLQLSFGLSGVPPALLHTLSLAIVVALHVLLGEMVPKNIALAGPERTAMLLVPPYLVYVRLARPFIAFYNNCANAILRLVGVQPKDELDIAVSTAELSEMIAESLSEGLLDHEEHTRLTRALRIRTRLVADVAVPLVNIRAVQVSAVGSGPTIGGVEQALAQTGYSRFPVVDRGGRFIGYLHIKDVLTLGDNPQTVIDLAVVRPLPRVPQSLPLADALSRMRRINSHLALVTADNGSVVGMVALEDVVEDLVGTMRDGTHR</sequence>
<gene>
    <name type="ordered locus">Rv1841c</name>
    <name type="ORF">MTCY1A11.03</name>
    <name type="ORF">MTCY359.32</name>
</gene>
<protein>
    <recommendedName>
        <fullName>Uncharacterized protein Rv1841c</fullName>
    </recommendedName>
</protein>
<comment type="subcellular location">
    <subcellularLocation>
        <location evidence="4">Cell membrane</location>
        <topology evidence="4">Multi-pass membrane protein</topology>
    </subcellularLocation>
</comment>
<comment type="similarity">
    <text evidence="4">Belongs to the TerC family.</text>
</comment>
<accession>P9WLQ7</accession>
<accession>L0T7V1</accession>
<accession>Q50593</accession>